<protein>
    <recommendedName>
        <fullName evidence="1">Membrane protein insertase YidC</fullName>
    </recommendedName>
    <alternativeName>
        <fullName evidence="1">Foldase YidC</fullName>
    </alternativeName>
    <alternativeName>
        <fullName evidence="1">Membrane integrase YidC</fullName>
    </alternativeName>
    <alternativeName>
        <fullName evidence="1">Membrane protein YidC</fullName>
    </alternativeName>
</protein>
<name>YIDC_PASMU</name>
<proteinExistence type="inferred from homology"/>
<sequence>MDSRRSLLVIALLFISFLVYQQWQLDYHTPKPVATEQVKVSSDVPASSASSSSDIATTAQAQGRIITLENDVFRLEVDTLGGDVVHSELLKYDAELNSNTPFTLLTNKANHVYIAQSGLVGKDGIDTKAGRANYQVDGDTFKLADGQNELAVPFVFEKDGVTFRKIFVLKRGAYDIAVNFEIDNQSDKTIEVEPYGQLRHTLVEDTGNVAMPTYTGGAYSSSETNYKKYSFADMEKANLSISTKAGWVAVLQHYFVSAWIPNQDADNQLYSLTDKANNLASIGYRGPVTAIPAGAKETIRSSLWTGPKLQDQMATVANHLDLSVDYGWAWFIAKPLFWLLTFIQSIVQNWGLAIIGVTLVVKAILYPLTKAQYTSMAKMRMLQPKLQEMRERFGEDRQRMSQEMMKLYKEEKVNPLGGCLPILLQMPIFIALYWTFLEAVELRHAPFFGWIQDLSAQDPYYILPILMGASMFLLQKMSPTPVADPTQQKIMNFMPLIFMVFFLWFPSGLVLYWLVSNLITIAQQQLIYRGLEKKGLHSRHK</sequence>
<comment type="function">
    <text evidence="1">Required for the insertion and/or proper folding and/or complex formation of integral membrane proteins into the membrane. Involved in integration of membrane proteins that insert both dependently and independently of the Sec translocase complex, as well as at least some lipoproteins. Aids folding of multispanning membrane proteins.</text>
</comment>
<comment type="subunit">
    <text evidence="1">Interacts with the Sec translocase complex via SecD. Specifically interacts with transmembrane segments of nascent integral membrane proteins during membrane integration.</text>
</comment>
<comment type="subcellular location">
    <subcellularLocation>
        <location evidence="1">Cell inner membrane</location>
        <topology evidence="1">Multi-pass membrane protein</topology>
    </subcellularLocation>
</comment>
<comment type="similarity">
    <text evidence="1">Belongs to the OXA1/ALB3/YidC family. Type 1 subfamily.</text>
</comment>
<accession>Q9CLQ2</accession>
<gene>
    <name evidence="1" type="primary">yidC</name>
    <name type="ordered locus">PM1165</name>
</gene>
<keyword id="KW-0997">Cell inner membrane</keyword>
<keyword id="KW-1003">Cell membrane</keyword>
<keyword id="KW-0143">Chaperone</keyword>
<keyword id="KW-0472">Membrane</keyword>
<keyword id="KW-0653">Protein transport</keyword>
<keyword id="KW-1185">Reference proteome</keyword>
<keyword id="KW-0812">Transmembrane</keyword>
<keyword id="KW-1133">Transmembrane helix</keyword>
<keyword id="KW-0813">Transport</keyword>
<dbReference type="EMBL" id="AE004439">
    <property type="protein sequence ID" value="AAK03249.1"/>
    <property type="molecule type" value="Genomic_DNA"/>
</dbReference>
<dbReference type="RefSeq" id="WP_005754690.1">
    <property type="nucleotide sequence ID" value="NC_002663.1"/>
</dbReference>
<dbReference type="SMR" id="Q9CLQ2"/>
<dbReference type="STRING" id="272843.PM1165"/>
<dbReference type="EnsemblBacteria" id="AAK03249">
    <property type="protein sequence ID" value="AAK03249"/>
    <property type="gene ID" value="PM1165"/>
</dbReference>
<dbReference type="KEGG" id="pmu:PM1165"/>
<dbReference type="PATRIC" id="fig|272843.6.peg.1176"/>
<dbReference type="HOGENOM" id="CLU_016535_3_0_6"/>
<dbReference type="OrthoDB" id="9780552at2"/>
<dbReference type="Proteomes" id="UP000000809">
    <property type="component" value="Chromosome"/>
</dbReference>
<dbReference type="GO" id="GO:0005886">
    <property type="term" value="C:plasma membrane"/>
    <property type="evidence" value="ECO:0007669"/>
    <property type="project" value="UniProtKB-SubCell"/>
</dbReference>
<dbReference type="GO" id="GO:0032977">
    <property type="term" value="F:membrane insertase activity"/>
    <property type="evidence" value="ECO:0007669"/>
    <property type="project" value="InterPro"/>
</dbReference>
<dbReference type="GO" id="GO:0051205">
    <property type="term" value="P:protein insertion into membrane"/>
    <property type="evidence" value="ECO:0007669"/>
    <property type="project" value="TreeGrafter"/>
</dbReference>
<dbReference type="GO" id="GO:0015031">
    <property type="term" value="P:protein transport"/>
    <property type="evidence" value="ECO:0007669"/>
    <property type="project" value="UniProtKB-KW"/>
</dbReference>
<dbReference type="CDD" id="cd20070">
    <property type="entry name" value="5TM_YidC_Alb3"/>
    <property type="match status" value="1"/>
</dbReference>
<dbReference type="CDD" id="cd19961">
    <property type="entry name" value="EcYidC-like_peri"/>
    <property type="match status" value="1"/>
</dbReference>
<dbReference type="Gene3D" id="2.70.98.90">
    <property type="match status" value="1"/>
</dbReference>
<dbReference type="HAMAP" id="MF_01810">
    <property type="entry name" value="YidC_type1"/>
    <property type="match status" value="1"/>
</dbReference>
<dbReference type="InterPro" id="IPR019998">
    <property type="entry name" value="Membr_insert_YidC"/>
</dbReference>
<dbReference type="InterPro" id="IPR028053">
    <property type="entry name" value="Membr_insert_YidC_N"/>
</dbReference>
<dbReference type="InterPro" id="IPR001708">
    <property type="entry name" value="YidC/ALB3/OXA1/COX18"/>
</dbReference>
<dbReference type="InterPro" id="IPR028055">
    <property type="entry name" value="YidC/Oxa/ALB_C"/>
</dbReference>
<dbReference type="InterPro" id="IPR047196">
    <property type="entry name" value="YidC_ALB_C"/>
</dbReference>
<dbReference type="InterPro" id="IPR038221">
    <property type="entry name" value="YidC_periplasmic_sf"/>
</dbReference>
<dbReference type="NCBIfam" id="NF002351">
    <property type="entry name" value="PRK01318.1-1"/>
    <property type="match status" value="1"/>
</dbReference>
<dbReference type="NCBIfam" id="NF002352">
    <property type="entry name" value="PRK01318.1-3"/>
    <property type="match status" value="1"/>
</dbReference>
<dbReference type="NCBIfam" id="TIGR03593">
    <property type="entry name" value="yidC_nterm"/>
    <property type="match status" value="1"/>
</dbReference>
<dbReference type="NCBIfam" id="TIGR03592">
    <property type="entry name" value="yidC_oxa1_cterm"/>
    <property type="match status" value="1"/>
</dbReference>
<dbReference type="PANTHER" id="PTHR12428:SF65">
    <property type="entry name" value="CYTOCHROME C OXIDASE ASSEMBLY PROTEIN COX18, MITOCHONDRIAL"/>
    <property type="match status" value="1"/>
</dbReference>
<dbReference type="PANTHER" id="PTHR12428">
    <property type="entry name" value="OXA1"/>
    <property type="match status" value="1"/>
</dbReference>
<dbReference type="Pfam" id="PF02096">
    <property type="entry name" value="60KD_IMP"/>
    <property type="match status" value="1"/>
</dbReference>
<dbReference type="Pfam" id="PF14849">
    <property type="entry name" value="YidC_periplas"/>
    <property type="match status" value="1"/>
</dbReference>
<dbReference type="PRINTS" id="PR00701">
    <property type="entry name" value="60KDINNERMP"/>
</dbReference>
<dbReference type="PRINTS" id="PR01900">
    <property type="entry name" value="YIDCPROTEIN"/>
</dbReference>
<reference key="1">
    <citation type="journal article" date="2001" name="Proc. Natl. Acad. Sci. U.S.A.">
        <title>Complete genomic sequence of Pasteurella multocida Pm70.</title>
        <authorList>
            <person name="May B.J."/>
            <person name="Zhang Q."/>
            <person name="Li L.L."/>
            <person name="Paustian M.L."/>
            <person name="Whittam T.S."/>
            <person name="Kapur V."/>
        </authorList>
    </citation>
    <scope>NUCLEOTIDE SEQUENCE [LARGE SCALE GENOMIC DNA]</scope>
    <source>
        <strain>Pm70</strain>
    </source>
</reference>
<evidence type="ECO:0000255" key="1">
    <source>
        <dbReference type="HAMAP-Rule" id="MF_01810"/>
    </source>
</evidence>
<feature type="chain" id="PRO_0000124735" description="Membrane protein insertase YidC">
    <location>
        <begin position="1"/>
        <end position="541"/>
    </location>
</feature>
<feature type="transmembrane region" description="Helical" evidence="1">
    <location>
        <begin position="7"/>
        <end position="27"/>
    </location>
</feature>
<feature type="transmembrane region" description="Helical" evidence="1">
    <location>
        <begin position="346"/>
        <end position="368"/>
    </location>
</feature>
<feature type="transmembrane region" description="Helical" evidence="1">
    <location>
        <begin position="416"/>
        <end position="436"/>
    </location>
</feature>
<feature type="transmembrane region" description="Helical" evidence="1">
    <location>
        <begin position="454"/>
        <end position="474"/>
    </location>
</feature>
<feature type="transmembrane region" description="Helical" evidence="1">
    <location>
        <begin position="495"/>
        <end position="515"/>
    </location>
</feature>
<organism>
    <name type="scientific">Pasteurella multocida (strain Pm70)</name>
    <dbReference type="NCBI Taxonomy" id="272843"/>
    <lineage>
        <taxon>Bacteria</taxon>
        <taxon>Pseudomonadati</taxon>
        <taxon>Pseudomonadota</taxon>
        <taxon>Gammaproteobacteria</taxon>
        <taxon>Pasteurellales</taxon>
        <taxon>Pasteurellaceae</taxon>
        <taxon>Pasteurella</taxon>
    </lineage>
</organism>